<sequence length="193" mass="21836">MLENLKKYKIVLASNSPRRRNLLSGLDIDFEVRVISDIDESYPDSIDSMEIPLYIARSKAEAYKPTMADDELLITADTIVWTFDGVMGKPANREEAYAMLHALSDHVHQVITGVCIMTKDKNVGFSVESAVCFAKLGDEEINYYLDKYKPYDKAGGYGIQEWIGYIGVEAINGSFYNVMGLPVQKLYQELKHF</sequence>
<gene>
    <name type="ordered locus">BDI_0169</name>
</gene>
<feature type="chain" id="PRO_1000060953" description="dTTP/UTP pyrophosphatase">
    <location>
        <begin position="1"/>
        <end position="193"/>
    </location>
</feature>
<feature type="active site" description="Proton acceptor" evidence="1">
    <location>
        <position position="77"/>
    </location>
</feature>
<feature type="site" description="Important for substrate specificity" evidence="1">
    <location>
        <position position="18"/>
    </location>
</feature>
<feature type="site" description="Important for substrate specificity" evidence="1">
    <location>
        <position position="78"/>
    </location>
</feature>
<feature type="site" description="Important for substrate specificity" evidence="1">
    <location>
        <position position="160"/>
    </location>
</feature>
<accession>A6L8E5</accession>
<keyword id="KW-0963">Cytoplasm</keyword>
<keyword id="KW-0378">Hydrolase</keyword>
<keyword id="KW-0546">Nucleotide metabolism</keyword>
<keyword id="KW-1185">Reference proteome</keyword>
<reference key="1">
    <citation type="journal article" date="2007" name="PLoS Biol.">
        <title>Evolution of symbiotic bacteria in the distal human intestine.</title>
        <authorList>
            <person name="Xu J."/>
            <person name="Mahowald M.A."/>
            <person name="Ley R.E."/>
            <person name="Lozupone C.A."/>
            <person name="Hamady M."/>
            <person name="Martens E.C."/>
            <person name="Henrissat B."/>
            <person name="Coutinho P.M."/>
            <person name="Minx P."/>
            <person name="Latreille P."/>
            <person name="Cordum H."/>
            <person name="Van Brunt A."/>
            <person name="Kim K."/>
            <person name="Fulton R.S."/>
            <person name="Fulton L.A."/>
            <person name="Clifton S.W."/>
            <person name="Wilson R.K."/>
            <person name="Knight R.D."/>
            <person name="Gordon J.I."/>
        </authorList>
    </citation>
    <scope>NUCLEOTIDE SEQUENCE [LARGE SCALE GENOMIC DNA]</scope>
    <source>
        <strain>ATCC 8503 / DSM 20701 / CIP 104284 / JCM 5825 / NCTC 11152</strain>
    </source>
</reference>
<protein>
    <recommendedName>
        <fullName evidence="1">dTTP/UTP pyrophosphatase</fullName>
        <shortName evidence="1">dTTPase/UTPase</shortName>
        <ecNumber evidence="1">3.6.1.9</ecNumber>
    </recommendedName>
    <alternativeName>
        <fullName evidence="1">Nucleoside triphosphate pyrophosphatase</fullName>
    </alternativeName>
    <alternativeName>
        <fullName evidence="1">Nucleotide pyrophosphatase</fullName>
        <shortName evidence="1">Nucleotide PPase</shortName>
    </alternativeName>
</protein>
<proteinExistence type="inferred from homology"/>
<organism>
    <name type="scientific">Parabacteroides distasonis (strain ATCC 8503 / DSM 20701 / CIP 104284 / JCM 5825 / NCTC 11152)</name>
    <dbReference type="NCBI Taxonomy" id="435591"/>
    <lineage>
        <taxon>Bacteria</taxon>
        <taxon>Pseudomonadati</taxon>
        <taxon>Bacteroidota</taxon>
        <taxon>Bacteroidia</taxon>
        <taxon>Bacteroidales</taxon>
        <taxon>Tannerellaceae</taxon>
        <taxon>Parabacteroides</taxon>
    </lineage>
</organism>
<name>NTPPA_PARD8</name>
<comment type="function">
    <text evidence="1">Nucleoside triphosphate pyrophosphatase that hydrolyzes dTTP and UTP. May have a dual role in cell division arrest and in preventing the incorporation of modified nucleotides into cellular nucleic acids.</text>
</comment>
<comment type="catalytic activity">
    <reaction evidence="1">
        <text>dTTP + H2O = dTMP + diphosphate + H(+)</text>
        <dbReference type="Rhea" id="RHEA:28534"/>
        <dbReference type="ChEBI" id="CHEBI:15377"/>
        <dbReference type="ChEBI" id="CHEBI:15378"/>
        <dbReference type="ChEBI" id="CHEBI:33019"/>
        <dbReference type="ChEBI" id="CHEBI:37568"/>
        <dbReference type="ChEBI" id="CHEBI:63528"/>
        <dbReference type="EC" id="3.6.1.9"/>
    </reaction>
</comment>
<comment type="catalytic activity">
    <reaction evidence="1">
        <text>UTP + H2O = UMP + diphosphate + H(+)</text>
        <dbReference type="Rhea" id="RHEA:29395"/>
        <dbReference type="ChEBI" id="CHEBI:15377"/>
        <dbReference type="ChEBI" id="CHEBI:15378"/>
        <dbReference type="ChEBI" id="CHEBI:33019"/>
        <dbReference type="ChEBI" id="CHEBI:46398"/>
        <dbReference type="ChEBI" id="CHEBI:57865"/>
        <dbReference type="EC" id="3.6.1.9"/>
    </reaction>
</comment>
<comment type="cofactor">
    <cofactor evidence="1">
        <name>a divalent metal cation</name>
        <dbReference type="ChEBI" id="CHEBI:60240"/>
    </cofactor>
</comment>
<comment type="subcellular location">
    <subcellularLocation>
        <location evidence="1">Cytoplasm</location>
    </subcellularLocation>
</comment>
<comment type="similarity">
    <text evidence="1">Belongs to the Maf family. YhdE subfamily.</text>
</comment>
<dbReference type="EC" id="3.6.1.9" evidence="1"/>
<dbReference type="EMBL" id="CP000140">
    <property type="protein sequence ID" value="ABR41959.1"/>
    <property type="molecule type" value="Genomic_DNA"/>
</dbReference>
<dbReference type="RefSeq" id="WP_005861534.1">
    <property type="nucleotide sequence ID" value="NC_009615.1"/>
</dbReference>
<dbReference type="SMR" id="A6L8E5"/>
<dbReference type="STRING" id="435591.BDI_0169"/>
<dbReference type="PaxDb" id="435591-BDI_0169"/>
<dbReference type="KEGG" id="pdi:BDI_0169"/>
<dbReference type="eggNOG" id="COG0424">
    <property type="taxonomic scope" value="Bacteria"/>
</dbReference>
<dbReference type="HOGENOM" id="CLU_040416_0_0_10"/>
<dbReference type="BioCyc" id="PDIS435591:G1G5A-172-MONOMER"/>
<dbReference type="Proteomes" id="UP000000566">
    <property type="component" value="Chromosome"/>
</dbReference>
<dbReference type="GO" id="GO:0005737">
    <property type="term" value="C:cytoplasm"/>
    <property type="evidence" value="ECO:0007669"/>
    <property type="project" value="UniProtKB-SubCell"/>
</dbReference>
<dbReference type="GO" id="GO:0036218">
    <property type="term" value="F:dTTP diphosphatase activity"/>
    <property type="evidence" value="ECO:0007669"/>
    <property type="project" value="RHEA"/>
</dbReference>
<dbReference type="GO" id="GO:0036221">
    <property type="term" value="F:UTP diphosphatase activity"/>
    <property type="evidence" value="ECO:0007669"/>
    <property type="project" value="RHEA"/>
</dbReference>
<dbReference type="GO" id="GO:0009117">
    <property type="term" value="P:nucleotide metabolic process"/>
    <property type="evidence" value="ECO:0007669"/>
    <property type="project" value="UniProtKB-KW"/>
</dbReference>
<dbReference type="CDD" id="cd00555">
    <property type="entry name" value="Maf"/>
    <property type="match status" value="1"/>
</dbReference>
<dbReference type="Gene3D" id="3.90.950.10">
    <property type="match status" value="1"/>
</dbReference>
<dbReference type="HAMAP" id="MF_00528">
    <property type="entry name" value="Maf"/>
    <property type="match status" value="1"/>
</dbReference>
<dbReference type="InterPro" id="IPR029001">
    <property type="entry name" value="ITPase-like_fam"/>
</dbReference>
<dbReference type="InterPro" id="IPR003697">
    <property type="entry name" value="Maf-like"/>
</dbReference>
<dbReference type="NCBIfam" id="TIGR00172">
    <property type="entry name" value="maf"/>
    <property type="match status" value="1"/>
</dbReference>
<dbReference type="PANTHER" id="PTHR43213">
    <property type="entry name" value="BIFUNCTIONAL DTTP/UTP PYROPHOSPHATASE/METHYLTRANSFERASE PROTEIN-RELATED"/>
    <property type="match status" value="1"/>
</dbReference>
<dbReference type="PANTHER" id="PTHR43213:SF5">
    <property type="entry name" value="BIFUNCTIONAL DTTP_UTP PYROPHOSPHATASE_METHYLTRANSFERASE PROTEIN-RELATED"/>
    <property type="match status" value="1"/>
</dbReference>
<dbReference type="Pfam" id="PF02545">
    <property type="entry name" value="Maf"/>
    <property type="match status" value="1"/>
</dbReference>
<dbReference type="PIRSF" id="PIRSF006305">
    <property type="entry name" value="Maf"/>
    <property type="match status" value="1"/>
</dbReference>
<dbReference type="SUPFAM" id="SSF52972">
    <property type="entry name" value="ITPase-like"/>
    <property type="match status" value="1"/>
</dbReference>
<evidence type="ECO:0000255" key="1">
    <source>
        <dbReference type="HAMAP-Rule" id="MF_00528"/>
    </source>
</evidence>